<evidence type="ECO:0000255" key="1">
    <source>
        <dbReference type="HAMAP-Rule" id="MF_01390"/>
    </source>
</evidence>
<comment type="function">
    <text evidence="1">Usually encoded in the trnK tRNA gene intron. Probably assists in splicing its own and other chloroplast group II introns.</text>
</comment>
<comment type="subcellular location">
    <subcellularLocation>
        <location>Plastid</location>
        <location>Chloroplast</location>
    </subcellularLocation>
</comment>
<comment type="similarity">
    <text evidence="1">Belongs to the intron maturase 2 family. MatK subfamily.</text>
</comment>
<sequence length="505" mass="60515">MEEFQGYLELDRSRQHYLLYPLLFREYIYAFAHDHGLNRSILFQNAGYDNKSSSIXXXXXXXXXXXXXXXXXXXXXXXQNQFFGHNKNLYSQILSEGFAVIVEIPFSLRFLFSLERKEIAKSYNLRSIHSIFSFLEDKFTHLDYVSDVLIPYHIHLEILVQTLRYWVKDASSLHLLRFFLHNYWNSFITPKKHITFFLKGNPRLFLFLYNSHICEYEYIFLFLRNQSSRLRSTSSGIFFERIHFYVKIEHFHFVKVFFDNNFQCILWFLKDPFMHYVRYQGKFFMASKDTPLLMNKWKCYLVNLWQYHFSVWFQPGRIDINQLCKYSLDFLGYRSSVRLNSSVVRSQMLENLFLINNAMKKFETIVPIIPLIGSLYKSNFCNTFGHPISKPSRTDSSDSDIIDRFLRICRNLSHYHSGSSKKKSLXRVKYILRLSCVKTLARKHKMTVRTFVKRLGSEFFEEFLTEEEVVFSLIFPRTYSTSRRLYRGQIWYLDITSINDLVNYE</sequence>
<gene>
    <name evidence="1" type="primary">matK</name>
</gene>
<feature type="chain" id="PRO_0000143451" description="Maturase K">
    <location>
        <begin position="1"/>
        <end position="505"/>
    </location>
</feature>
<protein>
    <recommendedName>
        <fullName evidence="1">Maturase K</fullName>
    </recommendedName>
    <alternativeName>
        <fullName evidence="1">Intron maturase</fullName>
    </alternativeName>
</protein>
<name>MATK_KUNCA</name>
<organism>
    <name type="scientific">Kunzea capitata</name>
    <name type="common">Pink kunzea</name>
    <dbReference type="NCBI Taxonomy" id="106043"/>
    <lineage>
        <taxon>Eukaryota</taxon>
        <taxon>Viridiplantae</taxon>
        <taxon>Streptophyta</taxon>
        <taxon>Embryophyta</taxon>
        <taxon>Tracheophyta</taxon>
        <taxon>Spermatophyta</taxon>
        <taxon>Magnoliopsida</taxon>
        <taxon>eudicotyledons</taxon>
        <taxon>Gunneridae</taxon>
        <taxon>Pentapetalae</taxon>
        <taxon>rosids</taxon>
        <taxon>malvids</taxon>
        <taxon>Myrtales</taxon>
        <taxon>Myrtaceae</taxon>
        <taxon>Myrtoideae</taxon>
        <taxon>Leptospermeae</taxon>
        <taxon>Kunzea</taxon>
    </lineage>
</organism>
<keyword id="KW-0150">Chloroplast</keyword>
<keyword id="KW-0507">mRNA processing</keyword>
<keyword id="KW-0934">Plastid</keyword>
<keyword id="KW-0694">RNA-binding</keyword>
<keyword id="KW-0819">tRNA processing</keyword>
<geneLocation type="chloroplast"/>
<reference key="1">
    <citation type="journal article" date="2000" name="Aust. J. Bot.">
        <title>Molecular systematics of the Leptospermum suballiance (Myrtaceae).</title>
        <authorList>
            <person name="O'Brien M.M."/>
            <person name="Quinn C.J."/>
            <person name="Wilson P.G."/>
        </authorList>
        <dbReference type="AGRICOLA" id="IND22905647"/>
    </citation>
    <scope>NUCLEOTIDE SEQUENCE [GENOMIC DNA]</scope>
</reference>
<reference key="2">
    <citation type="submission" date="2004-03" db="EMBL/GenBank/DDBJ databases">
        <authorList>
            <person name="O'Brien M.M."/>
            <person name="Quinn C.J."/>
            <person name="Wilson P.G."/>
        </authorList>
    </citation>
    <scope>SEQUENCE REVISION</scope>
</reference>
<dbReference type="EMBL" id="AF184723">
    <property type="protein sequence ID" value="AAF05930.2"/>
    <property type="molecule type" value="Genomic_DNA"/>
</dbReference>
<dbReference type="GO" id="GO:0009507">
    <property type="term" value="C:chloroplast"/>
    <property type="evidence" value="ECO:0007669"/>
    <property type="project" value="UniProtKB-SubCell"/>
</dbReference>
<dbReference type="GO" id="GO:0003723">
    <property type="term" value="F:RNA binding"/>
    <property type="evidence" value="ECO:0007669"/>
    <property type="project" value="UniProtKB-KW"/>
</dbReference>
<dbReference type="GO" id="GO:0006397">
    <property type="term" value="P:mRNA processing"/>
    <property type="evidence" value="ECO:0007669"/>
    <property type="project" value="UniProtKB-KW"/>
</dbReference>
<dbReference type="GO" id="GO:0008380">
    <property type="term" value="P:RNA splicing"/>
    <property type="evidence" value="ECO:0007669"/>
    <property type="project" value="UniProtKB-UniRule"/>
</dbReference>
<dbReference type="GO" id="GO:0008033">
    <property type="term" value="P:tRNA processing"/>
    <property type="evidence" value="ECO:0007669"/>
    <property type="project" value="UniProtKB-KW"/>
</dbReference>
<dbReference type="HAMAP" id="MF_01390">
    <property type="entry name" value="MatK"/>
    <property type="match status" value="1"/>
</dbReference>
<dbReference type="InterPro" id="IPR024937">
    <property type="entry name" value="Domain_X"/>
</dbReference>
<dbReference type="InterPro" id="IPR002866">
    <property type="entry name" value="Maturase_MatK"/>
</dbReference>
<dbReference type="InterPro" id="IPR024942">
    <property type="entry name" value="Maturase_MatK_N"/>
</dbReference>
<dbReference type="PANTHER" id="PTHR34811">
    <property type="entry name" value="MATURASE K"/>
    <property type="match status" value="1"/>
</dbReference>
<dbReference type="PANTHER" id="PTHR34811:SF1">
    <property type="entry name" value="MATURASE K"/>
    <property type="match status" value="1"/>
</dbReference>
<dbReference type="Pfam" id="PF01348">
    <property type="entry name" value="Intron_maturas2"/>
    <property type="match status" value="1"/>
</dbReference>
<dbReference type="Pfam" id="PF01824">
    <property type="entry name" value="MatK_N"/>
    <property type="match status" value="1"/>
</dbReference>
<proteinExistence type="inferred from homology"/>
<accession>Q9TKB9</accession>